<sequence>MNATLLGQAIAFTLFVWFCMKYVWPPIMEAIEERQKKIADGLSAAERAAKDLDLAQANASDQLKEAKRAATEIIEQANKRKSQILDEAREEALVERQKILTQGEAELESERNRARDELRKQVATLAVIGAEKILERSIDVEAQKDILDNITAKL</sequence>
<keyword id="KW-0066">ATP synthesis</keyword>
<keyword id="KW-0997">Cell inner membrane</keyword>
<keyword id="KW-1003">Cell membrane</keyword>
<keyword id="KW-0138">CF(0)</keyword>
<keyword id="KW-0375">Hydrogen ion transport</keyword>
<keyword id="KW-0406">Ion transport</keyword>
<keyword id="KW-0472">Membrane</keyword>
<keyword id="KW-0812">Transmembrane</keyword>
<keyword id="KW-1133">Transmembrane helix</keyword>
<keyword id="KW-0813">Transport</keyword>
<feature type="chain" id="PRO_0000368858" description="ATP synthase subunit b">
    <location>
        <begin position="1"/>
        <end position="154"/>
    </location>
</feature>
<feature type="transmembrane region" description="Helical" evidence="1">
    <location>
        <begin position="5"/>
        <end position="27"/>
    </location>
</feature>
<evidence type="ECO:0000255" key="1">
    <source>
        <dbReference type="HAMAP-Rule" id="MF_01398"/>
    </source>
</evidence>
<reference key="1">
    <citation type="submission" date="2008-08" db="EMBL/GenBank/DDBJ databases">
        <title>Complete sequence of Vibrio fischeri strain MJ11.</title>
        <authorList>
            <person name="Mandel M.J."/>
            <person name="Stabb E.V."/>
            <person name="Ruby E.G."/>
            <person name="Ferriera S."/>
            <person name="Johnson J."/>
            <person name="Kravitz S."/>
            <person name="Beeson K."/>
            <person name="Sutton G."/>
            <person name="Rogers Y.-H."/>
            <person name="Friedman R."/>
            <person name="Frazier M."/>
            <person name="Venter J.C."/>
        </authorList>
    </citation>
    <scope>NUCLEOTIDE SEQUENCE [LARGE SCALE GENOMIC DNA]</scope>
    <source>
        <strain>MJ11</strain>
    </source>
</reference>
<protein>
    <recommendedName>
        <fullName evidence="1">ATP synthase subunit b</fullName>
    </recommendedName>
    <alternativeName>
        <fullName evidence="1">ATP synthase F(0) sector subunit b</fullName>
    </alternativeName>
    <alternativeName>
        <fullName evidence="1">ATPase subunit I</fullName>
    </alternativeName>
    <alternativeName>
        <fullName evidence="1">F-type ATPase subunit b</fullName>
        <shortName evidence="1">F-ATPase subunit b</shortName>
    </alternativeName>
</protein>
<gene>
    <name evidence="1" type="primary">atpF</name>
    <name type="ordered locus">VFMJ11_2703</name>
</gene>
<dbReference type="EMBL" id="CP001139">
    <property type="protein sequence ID" value="ACH65030.1"/>
    <property type="molecule type" value="Genomic_DNA"/>
</dbReference>
<dbReference type="SMR" id="B5FCZ5"/>
<dbReference type="KEGG" id="vfm:VFMJ11_2703"/>
<dbReference type="HOGENOM" id="CLU_079215_4_5_6"/>
<dbReference type="Proteomes" id="UP000001857">
    <property type="component" value="Chromosome I"/>
</dbReference>
<dbReference type="GO" id="GO:0005886">
    <property type="term" value="C:plasma membrane"/>
    <property type="evidence" value="ECO:0007669"/>
    <property type="project" value="UniProtKB-SubCell"/>
</dbReference>
<dbReference type="GO" id="GO:0045259">
    <property type="term" value="C:proton-transporting ATP synthase complex"/>
    <property type="evidence" value="ECO:0007669"/>
    <property type="project" value="UniProtKB-KW"/>
</dbReference>
<dbReference type="GO" id="GO:0046933">
    <property type="term" value="F:proton-transporting ATP synthase activity, rotational mechanism"/>
    <property type="evidence" value="ECO:0007669"/>
    <property type="project" value="UniProtKB-UniRule"/>
</dbReference>
<dbReference type="GO" id="GO:0046961">
    <property type="term" value="F:proton-transporting ATPase activity, rotational mechanism"/>
    <property type="evidence" value="ECO:0007669"/>
    <property type="project" value="TreeGrafter"/>
</dbReference>
<dbReference type="CDD" id="cd06503">
    <property type="entry name" value="ATP-synt_Fo_b"/>
    <property type="match status" value="1"/>
</dbReference>
<dbReference type="Gene3D" id="6.10.250.1580">
    <property type="match status" value="1"/>
</dbReference>
<dbReference type="HAMAP" id="MF_01398">
    <property type="entry name" value="ATP_synth_b_bprime"/>
    <property type="match status" value="1"/>
</dbReference>
<dbReference type="InterPro" id="IPR028987">
    <property type="entry name" value="ATP_synth_B-like_membr_sf"/>
</dbReference>
<dbReference type="InterPro" id="IPR002146">
    <property type="entry name" value="ATP_synth_b/b'su_bac/chlpt"/>
</dbReference>
<dbReference type="InterPro" id="IPR005864">
    <property type="entry name" value="ATP_synth_F0_bsu_bac"/>
</dbReference>
<dbReference type="InterPro" id="IPR050059">
    <property type="entry name" value="ATP_synthase_B_chain"/>
</dbReference>
<dbReference type="NCBIfam" id="TIGR01144">
    <property type="entry name" value="ATP_synt_b"/>
    <property type="match status" value="1"/>
</dbReference>
<dbReference type="NCBIfam" id="NF004411">
    <property type="entry name" value="PRK05759.1-2"/>
    <property type="match status" value="1"/>
</dbReference>
<dbReference type="NCBIfam" id="NF004413">
    <property type="entry name" value="PRK05759.1-4"/>
    <property type="match status" value="1"/>
</dbReference>
<dbReference type="PANTHER" id="PTHR33445:SF1">
    <property type="entry name" value="ATP SYNTHASE SUBUNIT B"/>
    <property type="match status" value="1"/>
</dbReference>
<dbReference type="PANTHER" id="PTHR33445">
    <property type="entry name" value="ATP SYNTHASE SUBUNIT B', CHLOROPLASTIC"/>
    <property type="match status" value="1"/>
</dbReference>
<dbReference type="Pfam" id="PF00430">
    <property type="entry name" value="ATP-synt_B"/>
    <property type="match status" value="1"/>
</dbReference>
<dbReference type="SUPFAM" id="SSF81573">
    <property type="entry name" value="F1F0 ATP synthase subunit B, membrane domain"/>
    <property type="match status" value="1"/>
</dbReference>
<organism>
    <name type="scientific">Aliivibrio fischeri (strain MJ11)</name>
    <name type="common">Vibrio fischeri</name>
    <dbReference type="NCBI Taxonomy" id="388396"/>
    <lineage>
        <taxon>Bacteria</taxon>
        <taxon>Pseudomonadati</taxon>
        <taxon>Pseudomonadota</taxon>
        <taxon>Gammaproteobacteria</taxon>
        <taxon>Vibrionales</taxon>
        <taxon>Vibrionaceae</taxon>
        <taxon>Aliivibrio</taxon>
    </lineage>
</organism>
<proteinExistence type="inferred from homology"/>
<name>ATPF_ALIFM</name>
<accession>B5FCZ5</accession>
<comment type="function">
    <text evidence="1">F(1)F(0) ATP synthase produces ATP from ADP in the presence of a proton or sodium gradient. F-type ATPases consist of two structural domains, F(1) containing the extramembraneous catalytic core and F(0) containing the membrane proton channel, linked together by a central stalk and a peripheral stalk. During catalysis, ATP synthesis in the catalytic domain of F(1) is coupled via a rotary mechanism of the central stalk subunits to proton translocation.</text>
</comment>
<comment type="function">
    <text evidence="1">Component of the F(0) channel, it forms part of the peripheral stalk, linking F(1) to F(0).</text>
</comment>
<comment type="subunit">
    <text evidence="1">F-type ATPases have 2 components, F(1) - the catalytic core - and F(0) - the membrane proton channel. F(1) has five subunits: alpha(3), beta(3), gamma(1), delta(1), epsilon(1). F(0) has three main subunits: a(1), b(2) and c(10-14). The alpha and beta chains form an alternating ring which encloses part of the gamma chain. F(1) is attached to F(0) by a central stalk formed by the gamma and epsilon chains, while a peripheral stalk is formed by the delta and b chains.</text>
</comment>
<comment type="subcellular location">
    <subcellularLocation>
        <location evidence="1">Cell inner membrane</location>
        <topology evidence="1">Single-pass membrane protein</topology>
    </subcellularLocation>
</comment>
<comment type="similarity">
    <text evidence="1">Belongs to the ATPase B chain family.</text>
</comment>